<gene>
    <name type="primary">papA5</name>
    <name type="ordered locus">MRA_2965</name>
</gene>
<comment type="function">
    <text evidence="2">Catalyzes diesterification of phthiocerol, phthiodiolone, and phenolphthiocerol with mycocerosic acids, the final step in the phthiocerol, phthiodiolone and phenolphthiocerol dimycocerosate esters (PDIM) synthesis. Can directly transfer the mycocerosate bound to the mycocerosic acid synthase (mas) onto the substrate alcohols.</text>
</comment>
<comment type="catalytic activity">
    <reaction evidence="2">
        <text>2 a mycocerosyl-[mycocerosic acid synthase] + a phthiocerol = a dimycocerosyl phthiocerol + 2 holo-[mycocerosic acid synthase].</text>
        <dbReference type="EC" id="2.3.1.282"/>
    </reaction>
</comment>
<comment type="catalytic activity">
    <reaction evidence="2">
        <text>2 a mycocerosyl-[mycocerosic acid synthase] + a phthiodiolone = a dimycocerosyl phthiodiolone + 2 holo-[mycocerosic acid synthase].</text>
        <dbReference type="EC" id="2.3.1.282"/>
    </reaction>
</comment>
<comment type="catalytic activity">
    <reaction evidence="2">
        <text>2 a mycocerosyl-[mycocerosic acid synthase] + a phenolphthiocerol = a dimycocerosyl phenolphthiocerol + 2 holo-[mycocerosic acid synthase].</text>
        <dbReference type="EC" id="2.3.1.282"/>
    </reaction>
</comment>
<comment type="subunit">
    <text evidence="2">Monomer. Interacts directly with the acyl carrier protein (ACP) domain of the mycocerosic acid synthase (mas) protein.</text>
</comment>
<comment type="domain">
    <text evidence="2">Consists of two structural domains that are related to each other.</text>
</comment>
<comment type="similarity">
    <text evidence="3">Belongs to the acyltransferase PapA5 family.</text>
</comment>
<feature type="chain" id="PRO_0000332108" description="Phthiocerol/phthiodiolone dimycocerosyl transferase">
    <location>
        <begin position="1"/>
        <end position="422"/>
    </location>
</feature>
<feature type="active site" description="Proton acceptor" evidence="1">
    <location>
        <position position="124"/>
    </location>
</feature>
<feature type="site" description="Structural role in the organization of the active site" evidence="1">
    <location>
        <position position="128"/>
    </location>
</feature>
<feature type="site" description="Important for mas ACP domain recognition" evidence="1">
    <location>
        <position position="312"/>
    </location>
</feature>
<reference key="1">
    <citation type="journal article" date="2008" name="PLoS ONE">
        <title>Genetic basis of virulence attenuation revealed by comparative genomic analysis of Mycobacterium tuberculosis strain H37Ra versus H37Rv.</title>
        <authorList>
            <person name="Zheng H."/>
            <person name="Lu L."/>
            <person name="Wang B."/>
            <person name="Pu S."/>
            <person name="Zhang X."/>
            <person name="Zhu G."/>
            <person name="Shi W."/>
            <person name="Zhang L."/>
            <person name="Wang H."/>
            <person name="Wang S."/>
            <person name="Zhao G."/>
            <person name="Zhang Y."/>
        </authorList>
    </citation>
    <scope>NUCLEOTIDE SEQUENCE [LARGE SCALE GENOMIC DNA]</scope>
    <source>
        <strain>ATCC 25177 / H37Ra</strain>
    </source>
</reference>
<evidence type="ECO:0000250" key="1"/>
<evidence type="ECO:0000250" key="2">
    <source>
        <dbReference type="UniProtKB" id="P9WIN5"/>
    </source>
</evidence>
<evidence type="ECO:0000305" key="3"/>
<keyword id="KW-0012">Acyltransferase</keyword>
<keyword id="KW-0444">Lipid biosynthesis</keyword>
<keyword id="KW-0443">Lipid metabolism</keyword>
<keyword id="KW-1185">Reference proteome</keyword>
<keyword id="KW-0808">Transferase</keyword>
<sequence>MFPGSVIRKLSHSEEVFAQYEVFTSMTIQLRGVIDVDALSDAFDALLETHPVLASHLEQSSDGGWNLVADDLLHSGICVIDGTAATNGSPSGNAELRLDQSVSLLHLQLILREGGAELTLYLHHCMADGHHGAVLVDELFSRYTDAVTTGDPGPITPQPTPLSMEAVLAQRGIRKQGLSGAERFMSVMYAYEIPATETPAVLAHPGLPQAVPVTRLWLSKQQTSDLMAFGREHRLSLNAVVAAAILLTEWQLRNTPHVPIPYVYPVDLRFVLAPPVAPTEATNLLGAASYLAEIGPNTDIVDLASDIVATLRADLANGVIQQSGLHFGTAFEGTPPGLPPLVFCTDATSFPTMRTPPGLEIEDIKGQFYCSISVPLDLYSCAVYAGQLIIEHHGHIAEPGKSLEAIRSLLCTVPSEYGWIME</sequence>
<protein>
    <recommendedName>
        <fullName>Phthiocerol/phthiodiolone dimycocerosyl transferase</fullName>
        <ecNumber evidence="2">2.3.1.282</ecNumber>
    </recommendedName>
    <alternativeName>
        <fullName>Acyltransferase PapA5</fullName>
    </alternativeName>
    <alternativeName>
        <fullName>Phthiocerol/phthiodiolone O-acyltransferase</fullName>
    </alternativeName>
    <alternativeName>
        <fullName>Polyketide synthase-associated protein A5</fullName>
    </alternativeName>
</protein>
<accession>A5U6U6</accession>
<proteinExistence type="inferred from homology"/>
<name>PAPA5_MYCTA</name>
<dbReference type="EC" id="2.3.1.282" evidence="2"/>
<dbReference type="EMBL" id="CP000611">
    <property type="protein sequence ID" value="ABQ74746.1"/>
    <property type="molecule type" value="Genomic_DNA"/>
</dbReference>
<dbReference type="RefSeq" id="WP_003414853.1">
    <property type="nucleotide sequence ID" value="NZ_CP016972.1"/>
</dbReference>
<dbReference type="SMR" id="A5U6U6"/>
<dbReference type="KEGG" id="mra:MRA_2965"/>
<dbReference type="eggNOG" id="COG1020">
    <property type="taxonomic scope" value="Bacteria"/>
</dbReference>
<dbReference type="HOGENOM" id="CLU_050374_1_0_11"/>
<dbReference type="Proteomes" id="UP000001988">
    <property type="component" value="Chromosome"/>
</dbReference>
<dbReference type="GO" id="GO:0016746">
    <property type="term" value="F:acyltransferase activity"/>
    <property type="evidence" value="ECO:0007669"/>
    <property type="project" value="UniProtKB-KW"/>
</dbReference>
<dbReference type="GO" id="GO:0006629">
    <property type="term" value="P:lipid metabolic process"/>
    <property type="evidence" value="ECO:0007669"/>
    <property type="project" value="UniProtKB-KW"/>
</dbReference>
<dbReference type="Gene3D" id="3.30.559.10">
    <property type="entry name" value="Chloramphenicol acetyltransferase-like domain"/>
    <property type="match status" value="1"/>
</dbReference>
<dbReference type="Gene3D" id="3.30.559.30">
    <property type="entry name" value="Nonribosomal peptide synthetase, condensation domain"/>
    <property type="match status" value="1"/>
</dbReference>
<dbReference type="InterPro" id="IPR023213">
    <property type="entry name" value="CAT-like_dom_sf"/>
</dbReference>
<dbReference type="InterPro" id="IPR031641">
    <property type="entry name" value="PapA_C"/>
</dbReference>
<dbReference type="NCBIfam" id="NF006788">
    <property type="entry name" value="PRK09294.1-2"/>
    <property type="match status" value="1"/>
</dbReference>
<dbReference type="Pfam" id="PF16911">
    <property type="entry name" value="PapA_C"/>
    <property type="match status" value="1"/>
</dbReference>
<dbReference type="SUPFAM" id="SSF52777">
    <property type="entry name" value="CoA-dependent acyltransferases"/>
    <property type="match status" value="2"/>
</dbReference>
<organism>
    <name type="scientific">Mycobacterium tuberculosis (strain ATCC 25177 / H37Ra)</name>
    <dbReference type="NCBI Taxonomy" id="419947"/>
    <lineage>
        <taxon>Bacteria</taxon>
        <taxon>Bacillati</taxon>
        <taxon>Actinomycetota</taxon>
        <taxon>Actinomycetes</taxon>
        <taxon>Mycobacteriales</taxon>
        <taxon>Mycobacteriaceae</taxon>
        <taxon>Mycobacterium</taxon>
        <taxon>Mycobacterium tuberculosis complex</taxon>
    </lineage>
</organism>